<feature type="chain" id="PRO_1000078160" description="Dihydroorotate dehydrogenase (quinone)">
    <location>
        <begin position="1"/>
        <end position="353"/>
    </location>
</feature>
<feature type="active site" description="Nucleophile" evidence="1">
    <location>
        <position position="179"/>
    </location>
</feature>
<feature type="binding site" evidence="1">
    <location>
        <begin position="66"/>
        <end position="70"/>
    </location>
    <ligand>
        <name>FMN</name>
        <dbReference type="ChEBI" id="CHEBI:58210"/>
    </ligand>
</feature>
<feature type="binding site" evidence="1">
    <location>
        <position position="70"/>
    </location>
    <ligand>
        <name>substrate</name>
    </ligand>
</feature>
<feature type="binding site" evidence="1">
    <location>
        <position position="90"/>
    </location>
    <ligand>
        <name>FMN</name>
        <dbReference type="ChEBI" id="CHEBI:58210"/>
    </ligand>
</feature>
<feature type="binding site" evidence="1">
    <location>
        <begin position="115"/>
        <end position="119"/>
    </location>
    <ligand>
        <name>substrate</name>
    </ligand>
</feature>
<feature type="binding site" evidence="1">
    <location>
        <position position="143"/>
    </location>
    <ligand>
        <name>FMN</name>
        <dbReference type="ChEBI" id="CHEBI:58210"/>
    </ligand>
</feature>
<feature type="binding site" evidence="1">
    <location>
        <position position="176"/>
    </location>
    <ligand>
        <name>FMN</name>
        <dbReference type="ChEBI" id="CHEBI:58210"/>
    </ligand>
</feature>
<feature type="binding site" evidence="1">
    <location>
        <position position="176"/>
    </location>
    <ligand>
        <name>substrate</name>
    </ligand>
</feature>
<feature type="binding site" evidence="1">
    <location>
        <position position="181"/>
    </location>
    <ligand>
        <name>substrate</name>
    </ligand>
</feature>
<feature type="binding site" evidence="1">
    <location>
        <position position="212"/>
    </location>
    <ligand>
        <name>FMN</name>
        <dbReference type="ChEBI" id="CHEBI:58210"/>
    </ligand>
</feature>
<feature type="binding site" evidence="1">
    <location>
        <position position="240"/>
    </location>
    <ligand>
        <name>FMN</name>
        <dbReference type="ChEBI" id="CHEBI:58210"/>
    </ligand>
</feature>
<feature type="binding site" evidence="1">
    <location>
        <begin position="241"/>
        <end position="242"/>
    </location>
    <ligand>
        <name>substrate</name>
    </ligand>
</feature>
<feature type="binding site" evidence="1">
    <location>
        <position position="264"/>
    </location>
    <ligand>
        <name>FMN</name>
        <dbReference type="ChEBI" id="CHEBI:58210"/>
    </ligand>
</feature>
<feature type="binding site" evidence="1">
    <location>
        <position position="293"/>
    </location>
    <ligand>
        <name>FMN</name>
        <dbReference type="ChEBI" id="CHEBI:58210"/>
    </ligand>
</feature>
<feature type="binding site" evidence="1">
    <location>
        <begin position="314"/>
        <end position="315"/>
    </location>
    <ligand>
        <name>FMN</name>
        <dbReference type="ChEBI" id="CHEBI:58210"/>
    </ligand>
</feature>
<accession>A4TB97</accession>
<evidence type="ECO:0000255" key="1">
    <source>
        <dbReference type="HAMAP-Rule" id="MF_00225"/>
    </source>
</evidence>
<sequence>MYGALRKALFLVPPERIHGLVFAGLRAATTPVPLRRSLSRRLAPHDPVLASTVFGVRFPGPLGLAAGFDKDGLGVHTWGALGFGYAELGTVTAQAQPGNPPPRMFRLPADRALLNRMGFNNHGSAALALQLARSSSDVPIGVNIGKTKVTEPQDAPADYAESARLLGSLAAYLVVNVSSPNTPGLRDLQSVESLRPILSAVLAETSTPVLVKIAPDLADTDIDDIADLAVELGLAGIVATNTTISRDGLKTPGAADLGAGGISGPPVARRALEVLRRLYARVGDKLVLISVGGIETSDDAWERITAGASLLQGYTGFVYGGGLWARSINDGVAARLRENGFGTLAEAVGSAAR</sequence>
<proteinExistence type="inferred from homology"/>
<name>PYRD_MYCGI</name>
<keyword id="KW-1003">Cell membrane</keyword>
<keyword id="KW-0285">Flavoprotein</keyword>
<keyword id="KW-0288">FMN</keyword>
<keyword id="KW-0472">Membrane</keyword>
<keyword id="KW-0560">Oxidoreductase</keyword>
<keyword id="KW-0665">Pyrimidine biosynthesis</keyword>
<gene>
    <name evidence="1" type="primary">pyrD</name>
    <name type="ordered locus">Mflv_3039</name>
</gene>
<reference key="1">
    <citation type="submission" date="2007-04" db="EMBL/GenBank/DDBJ databases">
        <title>Complete sequence of chromosome of Mycobacterium gilvum PYR-GCK.</title>
        <authorList>
            <consortium name="US DOE Joint Genome Institute"/>
            <person name="Copeland A."/>
            <person name="Lucas S."/>
            <person name="Lapidus A."/>
            <person name="Barry K."/>
            <person name="Detter J.C."/>
            <person name="Glavina del Rio T."/>
            <person name="Hammon N."/>
            <person name="Israni S."/>
            <person name="Dalin E."/>
            <person name="Tice H."/>
            <person name="Pitluck S."/>
            <person name="Chain P."/>
            <person name="Malfatti S."/>
            <person name="Shin M."/>
            <person name="Vergez L."/>
            <person name="Schmutz J."/>
            <person name="Larimer F."/>
            <person name="Land M."/>
            <person name="Hauser L."/>
            <person name="Kyrpides N."/>
            <person name="Mikhailova N."/>
            <person name="Miller C."/>
            <person name="Richardson P."/>
        </authorList>
    </citation>
    <scope>NUCLEOTIDE SEQUENCE [LARGE SCALE GENOMIC DNA]</scope>
    <source>
        <strain>PYR-GCK</strain>
    </source>
</reference>
<organism>
    <name type="scientific">Mycolicibacterium gilvum (strain PYR-GCK)</name>
    <name type="common">Mycobacterium gilvum (strain PYR-GCK)</name>
    <dbReference type="NCBI Taxonomy" id="350054"/>
    <lineage>
        <taxon>Bacteria</taxon>
        <taxon>Bacillati</taxon>
        <taxon>Actinomycetota</taxon>
        <taxon>Actinomycetes</taxon>
        <taxon>Mycobacteriales</taxon>
        <taxon>Mycobacteriaceae</taxon>
        <taxon>Mycolicibacterium</taxon>
    </lineage>
</organism>
<comment type="function">
    <text evidence="1">Catalyzes the conversion of dihydroorotate to orotate with quinone as electron acceptor.</text>
</comment>
<comment type="catalytic activity">
    <reaction evidence="1">
        <text>(S)-dihydroorotate + a quinone = orotate + a quinol</text>
        <dbReference type="Rhea" id="RHEA:30187"/>
        <dbReference type="ChEBI" id="CHEBI:24646"/>
        <dbReference type="ChEBI" id="CHEBI:30839"/>
        <dbReference type="ChEBI" id="CHEBI:30864"/>
        <dbReference type="ChEBI" id="CHEBI:132124"/>
        <dbReference type="EC" id="1.3.5.2"/>
    </reaction>
</comment>
<comment type="cofactor">
    <cofactor evidence="1">
        <name>FMN</name>
        <dbReference type="ChEBI" id="CHEBI:58210"/>
    </cofactor>
    <text evidence="1">Binds 1 FMN per subunit.</text>
</comment>
<comment type="pathway">
    <text evidence="1">Pyrimidine metabolism; UMP biosynthesis via de novo pathway; orotate from (S)-dihydroorotate (quinone route): step 1/1.</text>
</comment>
<comment type="subunit">
    <text evidence="1">Monomer.</text>
</comment>
<comment type="subcellular location">
    <subcellularLocation>
        <location evidence="1">Cell membrane</location>
        <topology evidence="1">Peripheral membrane protein</topology>
    </subcellularLocation>
</comment>
<comment type="similarity">
    <text evidence="1">Belongs to the dihydroorotate dehydrogenase family. Type 2 subfamily.</text>
</comment>
<dbReference type="EC" id="1.3.5.2" evidence="1"/>
<dbReference type="EMBL" id="CP000656">
    <property type="protein sequence ID" value="ABP45516.1"/>
    <property type="molecule type" value="Genomic_DNA"/>
</dbReference>
<dbReference type="SMR" id="A4TB97"/>
<dbReference type="STRING" id="350054.Mflv_3039"/>
<dbReference type="KEGG" id="mgi:Mflv_3039"/>
<dbReference type="eggNOG" id="COG0167">
    <property type="taxonomic scope" value="Bacteria"/>
</dbReference>
<dbReference type="HOGENOM" id="CLU_013640_2_0_11"/>
<dbReference type="OrthoDB" id="9802377at2"/>
<dbReference type="UniPathway" id="UPA00070">
    <property type="reaction ID" value="UER00946"/>
</dbReference>
<dbReference type="GO" id="GO:0005737">
    <property type="term" value="C:cytoplasm"/>
    <property type="evidence" value="ECO:0007669"/>
    <property type="project" value="InterPro"/>
</dbReference>
<dbReference type="GO" id="GO:0005886">
    <property type="term" value="C:plasma membrane"/>
    <property type="evidence" value="ECO:0007669"/>
    <property type="project" value="UniProtKB-SubCell"/>
</dbReference>
<dbReference type="GO" id="GO:0106430">
    <property type="term" value="F:dihydroorotate dehydrogenase (quinone) activity"/>
    <property type="evidence" value="ECO:0007669"/>
    <property type="project" value="UniProtKB-EC"/>
</dbReference>
<dbReference type="GO" id="GO:0006207">
    <property type="term" value="P:'de novo' pyrimidine nucleobase biosynthetic process"/>
    <property type="evidence" value="ECO:0007669"/>
    <property type="project" value="InterPro"/>
</dbReference>
<dbReference type="GO" id="GO:0044205">
    <property type="term" value="P:'de novo' UMP biosynthetic process"/>
    <property type="evidence" value="ECO:0007669"/>
    <property type="project" value="UniProtKB-UniRule"/>
</dbReference>
<dbReference type="CDD" id="cd04738">
    <property type="entry name" value="DHOD_2_like"/>
    <property type="match status" value="1"/>
</dbReference>
<dbReference type="FunFam" id="3.20.20.70:FF:000123">
    <property type="entry name" value="Dihydroorotate dehydrogenase (quinone)"/>
    <property type="match status" value="1"/>
</dbReference>
<dbReference type="Gene3D" id="3.20.20.70">
    <property type="entry name" value="Aldolase class I"/>
    <property type="match status" value="1"/>
</dbReference>
<dbReference type="HAMAP" id="MF_00225">
    <property type="entry name" value="DHO_dh_type2"/>
    <property type="match status" value="1"/>
</dbReference>
<dbReference type="InterPro" id="IPR013785">
    <property type="entry name" value="Aldolase_TIM"/>
</dbReference>
<dbReference type="InterPro" id="IPR050074">
    <property type="entry name" value="DHO_dehydrogenase"/>
</dbReference>
<dbReference type="InterPro" id="IPR012135">
    <property type="entry name" value="Dihydroorotate_DH_1_2"/>
</dbReference>
<dbReference type="InterPro" id="IPR005719">
    <property type="entry name" value="Dihydroorotate_DH_2"/>
</dbReference>
<dbReference type="InterPro" id="IPR005720">
    <property type="entry name" value="Dihydroorotate_DH_cat"/>
</dbReference>
<dbReference type="InterPro" id="IPR001295">
    <property type="entry name" value="Dihydroorotate_DH_CS"/>
</dbReference>
<dbReference type="NCBIfam" id="NF003648">
    <property type="entry name" value="PRK05286.2-1"/>
    <property type="match status" value="1"/>
</dbReference>
<dbReference type="NCBIfam" id="NF003652">
    <property type="entry name" value="PRK05286.2-5"/>
    <property type="match status" value="1"/>
</dbReference>
<dbReference type="NCBIfam" id="TIGR01036">
    <property type="entry name" value="pyrD_sub2"/>
    <property type="match status" value="1"/>
</dbReference>
<dbReference type="PANTHER" id="PTHR48109:SF4">
    <property type="entry name" value="DIHYDROOROTATE DEHYDROGENASE (QUINONE), MITOCHONDRIAL"/>
    <property type="match status" value="1"/>
</dbReference>
<dbReference type="PANTHER" id="PTHR48109">
    <property type="entry name" value="DIHYDROOROTATE DEHYDROGENASE (QUINONE), MITOCHONDRIAL-RELATED"/>
    <property type="match status" value="1"/>
</dbReference>
<dbReference type="Pfam" id="PF01180">
    <property type="entry name" value="DHO_dh"/>
    <property type="match status" value="1"/>
</dbReference>
<dbReference type="PIRSF" id="PIRSF000164">
    <property type="entry name" value="DHO_oxidase"/>
    <property type="match status" value="1"/>
</dbReference>
<dbReference type="SUPFAM" id="SSF51395">
    <property type="entry name" value="FMN-linked oxidoreductases"/>
    <property type="match status" value="1"/>
</dbReference>
<dbReference type="PROSITE" id="PS00911">
    <property type="entry name" value="DHODEHASE_1"/>
    <property type="match status" value="1"/>
</dbReference>
<dbReference type="PROSITE" id="PS00912">
    <property type="entry name" value="DHODEHASE_2"/>
    <property type="match status" value="1"/>
</dbReference>
<protein>
    <recommendedName>
        <fullName evidence="1">Dihydroorotate dehydrogenase (quinone)</fullName>
        <ecNumber evidence="1">1.3.5.2</ecNumber>
    </recommendedName>
    <alternativeName>
        <fullName evidence="1">DHOdehase</fullName>
        <shortName evidence="1">DHOD</shortName>
        <shortName evidence="1">DHODase</shortName>
    </alternativeName>
    <alternativeName>
        <fullName evidence="1">Dihydroorotate oxidase</fullName>
    </alternativeName>
</protein>